<name>NDPA_SALHS</name>
<feature type="chain" id="PRO_1000132731" description="Nucleoid-associated protein YejK">
    <location>
        <begin position="1"/>
        <end position="335"/>
    </location>
</feature>
<keyword id="KW-0963">Cytoplasm</keyword>
<protein>
    <recommendedName>
        <fullName evidence="1">Nucleoid-associated protein YejK</fullName>
    </recommendedName>
</protein>
<organism>
    <name type="scientific">Salmonella heidelberg (strain SL476)</name>
    <dbReference type="NCBI Taxonomy" id="454169"/>
    <lineage>
        <taxon>Bacteria</taxon>
        <taxon>Pseudomonadati</taxon>
        <taxon>Pseudomonadota</taxon>
        <taxon>Gammaproteobacteria</taxon>
        <taxon>Enterobacterales</taxon>
        <taxon>Enterobacteriaceae</taxon>
        <taxon>Salmonella</taxon>
    </lineage>
</organism>
<gene>
    <name evidence="1" type="primary">yejK</name>
    <name type="ordered locus">SeHA_C2463</name>
</gene>
<evidence type="ECO:0000255" key="1">
    <source>
        <dbReference type="HAMAP-Rule" id="MF_00730"/>
    </source>
</evidence>
<comment type="subcellular location">
    <subcellularLocation>
        <location evidence="1">Cytoplasm</location>
        <location evidence="1">Nucleoid</location>
    </subcellularLocation>
</comment>
<comment type="similarity">
    <text evidence="1">Belongs to the YejK family.</text>
</comment>
<dbReference type="EMBL" id="CP001120">
    <property type="protein sequence ID" value="ACF66819.1"/>
    <property type="molecule type" value="Genomic_DNA"/>
</dbReference>
<dbReference type="RefSeq" id="WP_000050806.1">
    <property type="nucleotide sequence ID" value="NC_011083.1"/>
</dbReference>
<dbReference type="SMR" id="B4TAQ0"/>
<dbReference type="KEGG" id="seh:SeHA_C2463"/>
<dbReference type="HOGENOM" id="CLU_063050_0_1_6"/>
<dbReference type="Proteomes" id="UP000001866">
    <property type="component" value="Chromosome"/>
</dbReference>
<dbReference type="GO" id="GO:0043590">
    <property type="term" value="C:bacterial nucleoid"/>
    <property type="evidence" value="ECO:0007669"/>
    <property type="project" value="TreeGrafter"/>
</dbReference>
<dbReference type="GO" id="GO:0005737">
    <property type="term" value="C:cytoplasm"/>
    <property type="evidence" value="ECO:0007669"/>
    <property type="project" value="UniProtKB-UniRule"/>
</dbReference>
<dbReference type="GO" id="GO:0003690">
    <property type="term" value="F:double-stranded DNA binding"/>
    <property type="evidence" value="ECO:0007669"/>
    <property type="project" value="TreeGrafter"/>
</dbReference>
<dbReference type="GO" id="GO:0003727">
    <property type="term" value="F:single-stranded RNA binding"/>
    <property type="evidence" value="ECO:0007669"/>
    <property type="project" value="TreeGrafter"/>
</dbReference>
<dbReference type="HAMAP" id="MF_00730">
    <property type="entry name" value="NdpA"/>
    <property type="match status" value="1"/>
</dbReference>
<dbReference type="InterPro" id="IPR007358">
    <property type="entry name" value="Nucleoid_associated_NdpA"/>
</dbReference>
<dbReference type="NCBIfam" id="NF001557">
    <property type="entry name" value="PRK00378.1"/>
    <property type="match status" value="1"/>
</dbReference>
<dbReference type="PANTHER" id="PTHR38772">
    <property type="match status" value="1"/>
</dbReference>
<dbReference type="PANTHER" id="PTHR38772:SF1">
    <property type="entry name" value="NUCLEOID-ASSOCIATED PROTEIN YEJK"/>
    <property type="match status" value="1"/>
</dbReference>
<dbReference type="Pfam" id="PF04245">
    <property type="entry name" value="NA37"/>
    <property type="match status" value="1"/>
</dbReference>
<proteinExistence type="inferred from homology"/>
<reference key="1">
    <citation type="journal article" date="2011" name="J. Bacteriol.">
        <title>Comparative genomics of 28 Salmonella enterica isolates: evidence for CRISPR-mediated adaptive sublineage evolution.</title>
        <authorList>
            <person name="Fricke W.F."/>
            <person name="Mammel M.K."/>
            <person name="McDermott P.F."/>
            <person name="Tartera C."/>
            <person name="White D.G."/>
            <person name="Leclerc J.E."/>
            <person name="Ravel J."/>
            <person name="Cebula T.A."/>
        </authorList>
    </citation>
    <scope>NUCLEOTIDE SEQUENCE [LARGE SCALE GENOMIC DNA]</scope>
    <source>
        <strain>SL476</strain>
    </source>
</reference>
<sequence>MSLDINQIALHQLIKRDEQNLELVLRDSLLEPTTTVVEMVAELHRVYSAKNKAYGLFNEESELAQALRLQRQGEEDFLAFSRAATGRLRDELAKYPFADGGIVLFCHYRYLAVEYLLVTVLNNLSSMRVNENLDINPTHYLDINHADIVARIDLTEWETNPQSTRYLTFLKGRVGRKVADFFMDFLGASEGLNAKAQNRGLLQAVDDFTAEAQLDKAERQNVRQQVYSYCNEQLQAGEEIELESLSKELSGVSEVSFSEFTAEKGYELEESFPADRSTLRQLTKYAGSGGGLTINFDAMLLGERIFWDPATDTLTIKGTPPNLRDQLQRRTSGGK</sequence>
<accession>B4TAQ0</accession>